<comment type="subcellular location">
    <subcellularLocation>
        <location evidence="1">Cell membrane</location>
        <topology evidence="1">Single-pass membrane protein</topology>
    </subcellularLocation>
</comment>
<comment type="similarity">
    <text evidence="1">Belongs to the UPF0370 family.</text>
</comment>
<organism>
    <name type="scientific">Salmonella heidelberg (strain SL476)</name>
    <dbReference type="NCBI Taxonomy" id="454169"/>
    <lineage>
        <taxon>Bacteria</taxon>
        <taxon>Pseudomonadati</taxon>
        <taxon>Pseudomonadota</taxon>
        <taxon>Gammaproteobacteria</taxon>
        <taxon>Enterobacterales</taxon>
        <taxon>Enterobacteriaceae</taxon>
        <taxon>Salmonella</taxon>
    </lineage>
</organism>
<protein>
    <recommendedName>
        <fullName evidence="1">UPF0370 protein YpfN</fullName>
    </recommendedName>
</protein>
<evidence type="ECO:0000255" key="1">
    <source>
        <dbReference type="HAMAP-Rule" id="MF_01566"/>
    </source>
</evidence>
<evidence type="ECO:0000256" key="2">
    <source>
        <dbReference type="SAM" id="MobiDB-lite"/>
    </source>
</evidence>
<accession>B4TD59</accession>
<reference key="1">
    <citation type="journal article" date="2011" name="J. Bacteriol.">
        <title>Comparative genomics of 28 Salmonella enterica isolates: evidence for CRISPR-mediated adaptive sublineage evolution.</title>
        <authorList>
            <person name="Fricke W.F."/>
            <person name="Mammel M.K."/>
            <person name="McDermott P.F."/>
            <person name="Tartera C."/>
            <person name="White D.G."/>
            <person name="Leclerc J.E."/>
            <person name="Ravel J."/>
            <person name="Cebula T.A."/>
        </authorList>
    </citation>
    <scope>NUCLEOTIDE SEQUENCE [LARGE SCALE GENOMIC DNA]</scope>
    <source>
        <strain>SL476</strain>
    </source>
</reference>
<proteinExistence type="inferred from homology"/>
<feature type="chain" id="PRO_1000199731" description="UPF0370 protein YpfN">
    <location>
        <begin position="1"/>
        <end position="66"/>
    </location>
</feature>
<feature type="transmembrane region" description="Helical" evidence="1">
    <location>
        <begin position="4"/>
        <end position="24"/>
    </location>
</feature>
<feature type="region of interest" description="Disordered" evidence="2">
    <location>
        <begin position="39"/>
        <end position="66"/>
    </location>
</feature>
<feature type="compositionally biased region" description="Basic and acidic residues" evidence="2">
    <location>
        <begin position="42"/>
        <end position="51"/>
    </location>
</feature>
<gene>
    <name evidence="1" type="primary">ypfN</name>
    <name type="ordered locus">SeHA_C2743</name>
</gene>
<name>YPFN_SALHS</name>
<keyword id="KW-1003">Cell membrane</keyword>
<keyword id="KW-0472">Membrane</keyword>
<keyword id="KW-0812">Transmembrane</keyword>
<keyword id="KW-1133">Transmembrane helix</keyword>
<sequence>MDWLAKYWWILVLVFLVGVLLNVIKDLKRIDHKKFLANKPELPPHRDFNDKWDDEEDWPKKDQPKK</sequence>
<dbReference type="EMBL" id="CP001120">
    <property type="protein sequence ID" value="ACF69681.1"/>
    <property type="molecule type" value="Genomic_DNA"/>
</dbReference>
<dbReference type="RefSeq" id="WP_000383842.1">
    <property type="nucleotide sequence ID" value="NC_011083.1"/>
</dbReference>
<dbReference type="SMR" id="B4TD59"/>
<dbReference type="KEGG" id="seh:SeHA_C2743"/>
<dbReference type="HOGENOM" id="CLU_198936_0_0_6"/>
<dbReference type="Proteomes" id="UP000001866">
    <property type="component" value="Chromosome"/>
</dbReference>
<dbReference type="GO" id="GO:0005886">
    <property type="term" value="C:plasma membrane"/>
    <property type="evidence" value="ECO:0007669"/>
    <property type="project" value="UniProtKB-SubCell"/>
</dbReference>
<dbReference type="HAMAP" id="MF_01566">
    <property type="entry name" value="UPF0370"/>
    <property type="match status" value="1"/>
</dbReference>
<dbReference type="InterPro" id="IPR020910">
    <property type="entry name" value="UPF0370"/>
</dbReference>
<dbReference type="NCBIfam" id="NF010185">
    <property type="entry name" value="PRK13664.1"/>
    <property type="match status" value="1"/>
</dbReference>
<dbReference type="Pfam" id="PF13980">
    <property type="entry name" value="UPF0370"/>
    <property type="match status" value="1"/>
</dbReference>